<keyword id="KW-0240">DNA-directed RNA polymerase</keyword>
<keyword id="KW-0548">Nucleotidyltransferase</keyword>
<keyword id="KW-1185">Reference proteome</keyword>
<keyword id="KW-0804">Transcription</keyword>
<keyword id="KW-0808">Transferase</keyword>
<reference key="1">
    <citation type="journal article" date="2007" name="Genome Res.">
        <title>Genome characteristics of facultatively symbiotic Frankia sp. strains reflect host range and host plant biogeography.</title>
        <authorList>
            <person name="Normand P."/>
            <person name="Lapierre P."/>
            <person name="Tisa L.S."/>
            <person name="Gogarten J.P."/>
            <person name="Alloisio N."/>
            <person name="Bagnarol E."/>
            <person name="Bassi C.A."/>
            <person name="Berry A.M."/>
            <person name="Bickhart D.M."/>
            <person name="Choisne N."/>
            <person name="Couloux A."/>
            <person name="Cournoyer B."/>
            <person name="Cruveiller S."/>
            <person name="Daubin V."/>
            <person name="Demange N."/>
            <person name="Francino M.P."/>
            <person name="Goltsman E."/>
            <person name="Huang Y."/>
            <person name="Kopp O.R."/>
            <person name="Labarre L."/>
            <person name="Lapidus A."/>
            <person name="Lavire C."/>
            <person name="Marechal J."/>
            <person name="Martinez M."/>
            <person name="Mastronunzio J.E."/>
            <person name="Mullin B.C."/>
            <person name="Niemann J."/>
            <person name="Pujic P."/>
            <person name="Rawnsley T."/>
            <person name="Rouy Z."/>
            <person name="Schenowitz C."/>
            <person name="Sellstedt A."/>
            <person name="Tavares F."/>
            <person name="Tomkins J.P."/>
            <person name="Vallenet D."/>
            <person name="Valverde C."/>
            <person name="Wall L.G."/>
            <person name="Wang Y."/>
            <person name="Medigue C."/>
            <person name="Benson D.R."/>
        </authorList>
    </citation>
    <scope>NUCLEOTIDE SEQUENCE [LARGE SCALE GENOMIC DNA]</scope>
    <source>
        <strain>DSM 45986 / CECT 9034 / ACN14a</strain>
    </source>
</reference>
<accession>Q0RF85</accession>
<gene>
    <name evidence="1" type="primary">rpoZ</name>
    <name type="ordered locus">FRAAL5229</name>
</gene>
<sequence length="94" mass="10106">MAGTVAHPEGITNPPIDELLEATDSKYSLVIYAAKRARQINAYYSQLGEGLLEYVGPLVETTNAQEKPLSIALREINAGLLTHETVSDSLPPVA</sequence>
<dbReference type="EC" id="2.7.7.6" evidence="1"/>
<dbReference type="EMBL" id="CT573213">
    <property type="protein sequence ID" value="CAJ63862.1"/>
    <property type="molecule type" value="Genomic_DNA"/>
</dbReference>
<dbReference type="RefSeq" id="WP_009742799.1">
    <property type="nucleotide sequence ID" value="NC_008278.1"/>
</dbReference>
<dbReference type="SMR" id="Q0RF85"/>
<dbReference type="STRING" id="326424.FRAAL5229"/>
<dbReference type="KEGG" id="fal:FRAAL5229"/>
<dbReference type="eggNOG" id="COG1758">
    <property type="taxonomic scope" value="Bacteria"/>
</dbReference>
<dbReference type="HOGENOM" id="CLU_125406_1_1_11"/>
<dbReference type="OrthoDB" id="8481372at2"/>
<dbReference type="Proteomes" id="UP000000657">
    <property type="component" value="Chromosome"/>
</dbReference>
<dbReference type="GO" id="GO:0000428">
    <property type="term" value="C:DNA-directed RNA polymerase complex"/>
    <property type="evidence" value="ECO:0007669"/>
    <property type="project" value="UniProtKB-KW"/>
</dbReference>
<dbReference type="GO" id="GO:0003677">
    <property type="term" value="F:DNA binding"/>
    <property type="evidence" value="ECO:0007669"/>
    <property type="project" value="UniProtKB-UniRule"/>
</dbReference>
<dbReference type="GO" id="GO:0003899">
    <property type="term" value="F:DNA-directed RNA polymerase activity"/>
    <property type="evidence" value="ECO:0007669"/>
    <property type="project" value="UniProtKB-UniRule"/>
</dbReference>
<dbReference type="GO" id="GO:0006351">
    <property type="term" value="P:DNA-templated transcription"/>
    <property type="evidence" value="ECO:0007669"/>
    <property type="project" value="UniProtKB-UniRule"/>
</dbReference>
<dbReference type="Gene3D" id="3.90.940.10">
    <property type="match status" value="1"/>
</dbReference>
<dbReference type="HAMAP" id="MF_00366">
    <property type="entry name" value="RNApol_bact_RpoZ"/>
    <property type="match status" value="1"/>
</dbReference>
<dbReference type="InterPro" id="IPR003716">
    <property type="entry name" value="DNA-dir_RNA_pol_omega"/>
</dbReference>
<dbReference type="InterPro" id="IPR006110">
    <property type="entry name" value="Pol_omega/Rpo6/RPB6"/>
</dbReference>
<dbReference type="InterPro" id="IPR036161">
    <property type="entry name" value="RPB6/omega-like_sf"/>
</dbReference>
<dbReference type="NCBIfam" id="TIGR00690">
    <property type="entry name" value="rpoZ"/>
    <property type="match status" value="1"/>
</dbReference>
<dbReference type="PANTHER" id="PTHR34476">
    <property type="entry name" value="DNA-DIRECTED RNA POLYMERASE SUBUNIT OMEGA"/>
    <property type="match status" value="1"/>
</dbReference>
<dbReference type="PANTHER" id="PTHR34476:SF1">
    <property type="entry name" value="DNA-DIRECTED RNA POLYMERASE SUBUNIT OMEGA"/>
    <property type="match status" value="1"/>
</dbReference>
<dbReference type="Pfam" id="PF01192">
    <property type="entry name" value="RNA_pol_Rpb6"/>
    <property type="match status" value="1"/>
</dbReference>
<dbReference type="SMART" id="SM01409">
    <property type="entry name" value="RNA_pol_Rpb6"/>
    <property type="match status" value="1"/>
</dbReference>
<dbReference type="SUPFAM" id="SSF63562">
    <property type="entry name" value="RPB6/omega subunit-like"/>
    <property type="match status" value="1"/>
</dbReference>
<proteinExistence type="inferred from homology"/>
<organism>
    <name type="scientific">Frankia alni (strain DSM 45986 / CECT 9034 / ACN14a)</name>
    <dbReference type="NCBI Taxonomy" id="326424"/>
    <lineage>
        <taxon>Bacteria</taxon>
        <taxon>Bacillati</taxon>
        <taxon>Actinomycetota</taxon>
        <taxon>Actinomycetes</taxon>
        <taxon>Frankiales</taxon>
        <taxon>Frankiaceae</taxon>
        <taxon>Frankia</taxon>
    </lineage>
</organism>
<feature type="chain" id="PRO_1000005927" description="DNA-directed RNA polymerase subunit omega">
    <location>
        <begin position="1"/>
        <end position="94"/>
    </location>
</feature>
<comment type="function">
    <text evidence="1">Promotes RNA polymerase assembly. Latches the N- and C-terminal regions of the beta' subunit thereby facilitating its interaction with the beta and alpha subunits.</text>
</comment>
<comment type="catalytic activity">
    <reaction evidence="1">
        <text>RNA(n) + a ribonucleoside 5'-triphosphate = RNA(n+1) + diphosphate</text>
        <dbReference type="Rhea" id="RHEA:21248"/>
        <dbReference type="Rhea" id="RHEA-COMP:14527"/>
        <dbReference type="Rhea" id="RHEA-COMP:17342"/>
        <dbReference type="ChEBI" id="CHEBI:33019"/>
        <dbReference type="ChEBI" id="CHEBI:61557"/>
        <dbReference type="ChEBI" id="CHEBI:140395"/>
        <dbReference type="EC" id="2.7.7.6"/>
    </reaction>
</comment>
<comment type="subunit">
    <text evidence="1">The RNAP catalytic core consists of 2 alpha, 1 beta, 1 beta' and 1 omega subunit. When a sigma factor is associated with the core the holoenzyme is formed, which can initiate transcription.</text>
</comment>
<comment type="similarity">
    <text evidence="1">Belongs to the RNA polymerase subunit omega family.</text>
</comment>
<evidence type="ECO:0000255" key="1">
    <source>
        <dbReference type="HAMAP-Rule" id="MF_00366"/>
    </source>
</evidence>
<protein>
    <recommendedName>
        <fullName evidence="1">DNA-directed RNA polymerase subunit omega</fullName>
        <shortName evidence="1">RNAP omega subunit</shortName>
        <ecNumber evidence="1">2.7.7.6</ecNumber>
    </recommendedName>
    <alternativeName>
        <fullName evidence="1">RNA polymerase omega subunit</fullName>
    </alternativeName>
    <alternativeName>
        <fullName evidence="1">Transcriptase subunit omega</fullName>
    </alternativeName>
</protein>
<name>RPOZ_FRAAA</name>